<evidence type="ECO:0000250" key="1">
    <source>
        <dbReference type="UniProtKB" id="Q4QQU5"/>
    </source>
</evidence>
<evidence type="ECO:0000250" key="2">
    <source>
        <dbReference type="UniProtKB" id="Q96EC8"/>
    </source>
</evidence>
<evidence type="ECO:0000255" key="3"/>
<evidence type="ECO:0000305" key="4"/>
<keyword id="KW-0007">Acetylation</keyword>
<keyword id="KW-0333">Golgi apparatus</keyword>
<keyword id="KW-0472">Membrane</keyword>
<keyword id="KW-0597">Phosphoprotein</keyword>
<keyword id="KW-1185">Reference proteome</keyword>
<keyword id="KW-0812">Transmembrane</keyword>
<keyword id="KW-1133">Transmembrane helix</keyword>
<gene>
    <name type="primary">YIPF6</name>
</gene>
<protein>
    <recommendedName>
        <fullName>Protein YIPF6</fullName>
    </recommendedName>
    <alternativeName>
        <fullName>YIP1 family member 6</fullName>
    </alternativeName>
</protein>
<sequence>MAEAVESPGDPGTTTPRPLFAGLSDISISQDIPVEGEITIPVRSRVREFDSSTLNESVQNTIMRDLKAVGKKFMHVLYPRKSNTLLRDWDLWGPLILCVTLALMLQRGSVDSEKDGGPQFAEVFVIVWFGAVTITLNSKLLGGNISFFQSLCVLGYCILPLTMAMLVCRLVLLAEPGPVNFMVRLFVVIIMFAWSIVASTAFLADSQPPNRKALAVYPVFLFYFVISWMILTFTPQ</sequence>
<dbReference type="EMBL" id="BC147916">
    <property type="protein sequence ID" value="AAI47917.1"/>
    <property type="molecule type" value="mRNA"/>
</dbReference>
<dbReference type="RefSeq" id="NP_001094676.1">
    <property type="nucleotide sequence ID" value="NM_001101206.1"/>
</dbReference>
<dbReference type="FunCoup" id="A6QLC6">
    <property type="interactions" value="3266"/>
</dbReference>
<dbReference type="STRING" id="9913.ENSBTAP00000002566"/>
<dbReference type="PaxDb" id="9913-ENSBTAP00000002566"/>
<dbReference type="GeneID" id="540347"/>
<dbReference type="KEGG" id="bta:540347"/>
<dbReference type="CTD" id="286451"/>
<dbReference type="VEuPathDB" id="HostDB:ENSBTAG00000001977"/>
<dbReference type="eggNOG" id="KOG2946">
    <property type="taxonomic scope" value="Eukaryota"/>
</dbReference>
<dbReference type="HOGENOM" id="CLU_059592_3_0_1"/>
<dbReference type="InParanoid" id="A6QLC6"/>
<dbReference type="OMA" id="VMAMFGW"/>
<dbReference type="OrthoDB" id="411251at2759"/>
<dbReference type="TreeFam" id="TF314563"/>
<dbReference type="Reactome" id="R-BTA-432722">
    <property type="pathway name" value="Golgi Associated Vesicle Biogenesis"/>
</dbReference>
<dbReference type="Proteomes" id="UP000009136">
    <property type="component" value="Chromosome X"/>
</dbReference>
<dbReference type="Bgee" id="ENSBTAG00000001977">
    <property type="expression patterns" value="Expressed in oviduct epithelium and 107 other cell types or tissues"/>
</dbReference>
<dbReference type="GO" id="GO:0005797">
    <property type="term" value="C:Golgi medial cisterna"/>
    <property type="evidence" value="ECO:0000250"/>
    <property type="project" value="UniProtKB"/>
</dbReference>
<dbReference type="GO" id="GO:0000139">
    <property type="term" value="C:Golgi membrane"/>
    <property type="evidence" value="ECO:0007669"/>
    <property type="project" value="UniProtKB-SubCell"/>
</dbReference>
<dbReference type="GO" id="GO:0000138">
    <property type="term" value="C:Golgi trans cisterna"/>
    <property type="evidence" value="ECO:0000250"/>
    <property type="project" value="UniProtKB"/>
</dbReference>
<dbReference type="GO" id="GO:0005802">
    <property type="term" value="C:trans-Golgi network"/>
    <property type="evidence" value="ECO:0000250"/>
    <property type="project" value="UniProtKB"/>
</dbReference>
<dbReference type="GO" id="GO:0006888">
    <property type="term" value="P:endoplasmic reticulum to Golgi vesicle-mediated transport"/>
    <property type="evidence" value="ECO:0007669"/>
    <property type="project" value="InterPro"/>
</dbReference>
<dbReference type="InterPro" id="IPR045231">
    <property type="entry name" value="Yip1/4-like"/>
</dbReference>
<dbReference type="InterPro" id="IPR006977">
    <property type="entry name" value="Yip1_dom"/>
</dbReference>
<dbReference type="PANTHER" id="PTHR21236">
    <property type="entry name" value="GOLGI MEMBRANE PROTEIN YIP1"/>
    <property type="match status" value="1"/>
</dbReference>
<dbReference type="PANTHER" id="PTHR21236:SF1">
    <property type="entry name" value="PROTEIN YIPF6"/>
    <property type="match status" value="1"/>
</dbReference>
<dbReference type="Pfam" id="PF04893">
    <property type="entry name" value="Yip1"/>
    <property type="match status" value="1"/>
</dbReference>
<feature type="initiator methionine" description="Removed" evidence="2">
    <location>
        <position position="1"/>
    </location>
</feature>
<feature type="chain" id="PRO_0000330340" description="Protein YIPF6">
    <location>
        <begin position="2"/>
        <end position="236"/>
    </location>
</feature>
<feature type="topological domain" description="Cytoplasmic" evidence="2">
    <location>
        <begin position="2"/>
        <end position="84"/>
    </location>
</feature>
<feature type="transmembrane region" description="Helical" evidence="3">
    <location>
        <begin position="85"/>
        <end position="105"/>
    </location>
</feature>
<feature type="topological domain" description="Lumenal" evidence="4">
    <location>
        <begin position="106"/>
        <end position="115"/>
    </location>
</feature>
<feature type="transmembrane region" description="Helical" evidence="3">
    <location>
        <begin position="116"/>
        <end position="136"/>
    </location>
</feature>
<feature type="topological domain" description="Cytoplasmic" evidence="4">
    <location>
        <begin position="137"/>
        <end position="146"/>
    </location>
</feature>
<feature type="transmembrane region" description="Helical" evidence="3">
    <location>
        <begin position="147"/>
        <end position="167"/>
    </location>
</feature>
<feature type="topological domain" description="Lumenal" evidence="4">
    <location>
        <begin position="168"/>
        <end position="184"/>
    </location>
</feature>
<feature type="transmembrane region" description="Helical" evidence="3">
    <location>
        <begin position="185"/>
        <end position="205"/>
    </location>
</feature>
<feature type="topological domain" description="Cytoplasmic" evidence="4">
    <location>
        <begin position="206"/>
        <end position="212"/>
    </location>
</feature>
<feature type="transmembrane region" description="Helical" evidence="3">
    <location>
        <begin position="213"/>
        <end position="233"/>
    </location>
</feature>
<feature type="topological domain" description="Lumenal" evidence="2">
    <location>
        <begin position="234"/>
        <end position="236"/>
    </location>
</feature>
<feature type="modified residue" description="N-acetylalanine" evidence="2">
    <location>
        <position position="2"/>
    </location>
</feature>
<feature type="modified residue" description="Phosphoserine" evidence="1">
    <location>
        <position position="7"/>
    </location>
</feature>
<reference key="1">
    <citation type="submission" date="2007-06" db="EMBL/GenBank/DDBJ databases">
        <authorList>
            <consortium name="NIH - Mammalian Gene Collection (MGC) project"/>
        </authorList>
    </citation>
    <scope>NUCLEOTIDE SEQUENCE [LARGE SCALE MRNA]</scope>
    <source>
        <strain>Hereford</strain>
        <tissue>Fetal skin</tissue>
    </source>
</reference>
<proteinExistence type="evidence at transcript level"/>
<accession>A6QLC6</accession>
<organism>
    <name type="scientific">Bos taurus</name>
    <name type="common">Bovine</name>
    <dbReference type="NCBI Taxonomy" id="9913"/>
    <lineage>
        <taxon>Eukaryota</taxon>
        <taxon>Metazoa</taxon>
        <taxon>Chordata</taxon>
        <taxon>Craniata</taxon>
        <taxon>Vertebrata</taxon>
        <taxon>Euteleostomi</taxon>
        <taxon>Mammalia</taxon>
        <taxon>Eutheria</taxon>
        <taxon>Laurasiatheria</taxon>
        <taxon>Artiodactyla</taxon>
        <taxon>Ruminantia</taxon>
        <taxon>Pecora</taxon>
        <taxon>Bovidae</taxon>
        <taxon>Bovinae</taxon>
        <taxon>Bos</taxon>
    </lineage>
</organism>
<comment type="function">
    <text evidence="2">May be required for stable YIPF1 and YIPF2 protein expression.</text>
</comment>
<comment type="subunit">
    <text evidence="2">Predominantly interacts with YIPF1 or YIPF2, but may also form a ternary complex with YIPF1 and YIPF2. This interaction may stabilize YIPF1 and YIPF2.</text>
</comment>
<comment type="subcellular location">
    <subcellularLocation>
        <location evidence="2">Golgi apparatus membrane</location>
        <topology evidence="2">Multi-pass membrane protein</topology>
    </subcellularLocation>
    <text evidence="2">Evenly distributed between cis- and trans-Golgi apparatus. Mainly localizes within medial-/trans-Golgi and trans-Golgi network (TGN), while less so within cis-Golgi.</text>
</comment>
<comment type="similarity">
    <text evidence="4">Belongs to the YIP1 family.</text>
</comment>
<name>YIPF6_BOVIN</name>